<feature type="chain" id="PRO_0000078255" description="Heat shock 70 kDa protein 1-like">
    <location>
        <begin position="1"/>
        <end position="641"/>
    </location>
</feature>
<feature type="region of interest" description="Nucleotide-binding domain (NBD)" evidence="1">
    <location>
        <begin position="3"/>
        <end position="388"/>
    </location>
</feature>
<feature type="region of interest" description="Substrate-binding domain (SBD)" evidence="1">
    <location>
        <begin position="396"/>
        <end position="511"/>
    </location>
</feature>
<feature type="binding site">
    <location>
        <begin position="14"/>
        <end position="17"/>
    </location>
    <ligand>
        <name>ATP</name>
        <dbReference type="ChEBI" id="CHEBI:30616"/>
    </ligand>
</feature>
<feature type="binding site">
    <location>
        <position position="73"/>
    </location>
    <ligand>
        <name>ATP</name>
        <dbReference type="ChEBI" id="CHEBI:30616"/>
    </ligand>
</feature>
<feature type="binding site">
    <location>
        <begin position="204"/>
        <end position="206"/>
    </location>
    <ligand>
        <name>ATP</name>
        <dbReference type="ChEBI" id="CHEBI:30616"/>
    </ligand>
</feature>
<feature type="binding site">
    <location>
        <begin position="270"/>
        <end position="277"/>
    </location>
    <ligand>
        <name>ATP</name>
        <dbReference type="ChEBI" id="CHEBI:30616"/>
    </ligand>
</feature>
<feature type="binding site">
    <location>
        <begin position="341"/>
        <end position="344"/>
    </location>
    <ligand>
        <name>ATP</name>
        <dbReference type="ChEBI" id="CHEBI:30616"/>
    </ligand>
</feature>
<feature type="sequence variant" id="VAR_025841" description="In dbSNP:rs9469057." evidence="9">
    <original>A</original>
    <variation>P</variation>
    <location>
        <position position="8"/>
    </location>
</feature>
<feature type="sequence variant" id="VAR_025842" description="In dbSNP:rs34620296." evidence="9">
    <original>A</original>
    <variation>T</variation>
    <location>
        <position position="268"/>
    </location>
</feature>
<feature type="sequence variant" id="VAR_025843" description="In dbSNP:rs34360259." evidence="9">
    <original>D</original>
    <variation>G</variation>
    <location>
        <position position="294"/>
    </location>
</feature>
<feature type="sequence variant" id="VAR_025844" description="In dbSNP:rs482145." evidence="9">
    <original>T</original>
    <variation>M</variation>
    <location>
        <position position="479"/>
    </location>
</feature>
<feature type="sequence variant" id="VAR_003820" description="In dbSNP:rs2227956." evidence="2 3 4 9">
    <original>T</original>
    <variation>M</variation>
    <location>
        <position position="493"/>
    </location>
</feature>
<feature type="sequence variant" id="VAR_025845" description="In dbSNP:rs2227955." evidence="9">
    <original>E</original>
    <variation>A</variation>
    <location>
        <position position="558"/>
    </location>
</feature>
<feature type="sequence variant" id="VAR_025846" description="In dbSNP:rs2075800." evidence="9">
    <original>E</original>
    <variation>K</variation>
    <location>
        <position position="602"/>
    </location>
</feature>
<feature type="mutagenesis site" description="No rescue of PRKN translocation deficit in knockout cells." evidence="7">
    <original>K</original>
    <variation>E</variation>
    <location>
        <position position="73"/>
    </location>
</feature>
<feature type="mutagenesis site" description="No rescue of PRKN translocation deficit in knockout cells." evidence="7">
    <original>L</original>
    <variation>D</variation>
    <location>
        <position position="396"/>
    </location>
</feature>
<feature type="mutagenesis site" description="No rescue of PRKN translocation deficit in knockout cells." evidence="7">
    <location>
        <begin position="638"/>
        <end position="641"/>
    </location>
</feature>
<feature type="sequence conflict" description="In Ref. 1; AAA63228." evidence="11" ref="1">
    <original>A</original>
    <variation>V</variation>
    <location>
        <position position="408"/>
    </location>
</feature>
<feature type="sequence conflict" description="In Ref. 7; AAH34483." evidence="11" ref="7">
    <original>I</original>
    <variation>M</variation>
    <location>
        <position position="416"/>
    </location>
</feature>
<feature type="sequence conflict" description="In Ref. 1; AAA63228." evidence="11" ref="1">
    <original>T</original>
    <variation>P</variation>
    <location>
        <position position="424"/>
    </location>
</feature>
<feature type="sequence conflict" description="In Ref. 7; AAH34483." evidence="11" ref="7">
    <original>T</original>
    <variation>A</variation>
    <location>
        <position position="506"/>
    </location>
</feature>
<feature type="sequence conflict" description="In Ref. 2; BAA32521." evidence="11" ref="2">
    <original>V</original>
    <variation>M</variation>
    <location>
        <position position="627"/>
    </location>
</feature>
<feature type="strand" evidence="13">
    <location>
        <begin position="9"/>
        <end position="12"/>
    </location>
</feature>
<feature type="strand" evidence="13">
    <location>
        <begin position="15"/>
        <end position="24"/>
    </location>
</feature>
<feature type="strand" evidence="13">
    <location>
        <begin position="27"/>
        <end position="30"/>
    </location>
</feature>
<feature type="strand" evidence="13">
    <location>
        <begin position="38"/>
        <end position="41"/>
    </location>
</feature>
<feature type="strand" evidence="13">
    <location>
        <begin position="44"/>
        <end position="46"/>
    </location>
</feature>
<feature type="strand" evidence="13">
    <location>
        <begin position="51"/>
        <end position="53"/>
    </location>
</feature>
<feature type="helix" evidence="13">
    <location>
        <begin position="55"/>
        <end position="59"/>
    </location>
</feature>
<feature type="helix" evidence="13">
    <location>
        <begin position="60"/>
        <end position="63"/>
    </location>
</feature>
<feature type="helix" evidence="13">
    <location>
        <begin position="65"/>
        <end position="67"/>
    </location>
</feature>
<feature type="helix" evidence="13">
    <location>
        <begin position="72"/>
        <end position="75"/>
    </location>
</feature>
<feature type="helix" evidence="13">
    <location>
        <begin position="83"/>
        <end position="89"/>
    </location>
</feature>
<feature type="strand" evidence="13">
    <location>
        <begin position="93"/>
        <end position="99"/>
    </location>
</feature>
<feature type="strand" evidence="13">
    <location>
        <begin position="102"/>
        <end position="109"/>
    </location>
</feature>
<feature type="strand" evidence="13">
    <location>
        <begin position="112"/>
        <end position="116"/>
    </location>
</feature>
<feature type="helix" evidence="13">
    <location>
        <begin position="118"/>
        <end position="137"/>
    </location>
</feature>
<feature type="strand" evidence="13">
    <location>
        <begin position="143"/>
        <end position="148"/>
    </location>
</feature>
<feature type="helix" evidence="13">
    <location>
        <begin position="154"/>
        <end position="166"/>
    </location>
</feature>
<feature type="strand" evidence="13">
    <location>
        <begin position="170"/>
        <end position="176"/>
    </location>
</feature>
<feature type="helix" evidence="13">
    <location>
        <begin position="177"/>
        <end position="184"/>
    </location>
</feature>
<feature type="turn" evidence="13">
    <location>
        <begin position="185"/>
        <end position="188"/>
    </location>
</feature>
<feature type="strand" evidence="13">
    <location>
        <begin position="195"/>
        <end position="202"/>
    </location>
</feature>
<feature type="strand" evidence="13">
    <location>
        <begin position="207"/>
        <end position="215"/>
    </location>
</feature>
<feature type="strand" evidence="13">
    <location>
        <begin position="218"/>
        <end position="227"/>
    </location>
</feature>
<feature type="helix" evidence="13">
    <location>
        <begin position="232"/>
        <end position="251"/>
    </location>
</feature>
<feature type="helix" evidence="13">
    <location>
        <begin position="255"/>
        <end position="257"/>
    </location>
</feature>
<feature type="helix" evidence="13">
    <location>
        <begin position="259"/>
        <end position="275"/>
    </location>
</feature>
<feature type="turn" evidence="13">
    <location>
        <begin position="276"/>
        <end position="278"/>
    </location>
</feature>
<feature type="strand" evidence="13">
    <location>
        <begin position="279"/>
        <end position="290"/>
    </location>
</feature>
<feature type="strand" evidence="13">
    <location>
        <begin position="293"/>
        <end position="300"/>
    </location>
</feature>
<feature type="helix" evidence="13">
    <location>
        <begin position="301"/>
        <end position="307"/>
    </location>
</feature>
<feature type="helix" evidence="13">
    <location>
        <begin position="309"/>
        <end position="314"/>
    </location>
</feature>
<feature type="helix" evidence="13">
    <location>
        <begin position="316"/>
        <end position="325"/>
    </location>
</feature>
<feature type="helix" evidence="13">
    <location>
        <begin position="330"/>
        <end position="332"/>
    </location>
</feature>
<feature type="strand" evidence="13">
    <location>
        <begin position="335"/>
        <end position="340"/>
    </location>
</feature>
<feature type="helix" evidence="13">
    <location>
        <begin position="341"/>
        <end position="344"/>
    </location>
</feature>
<feature type="helix" evidence="13">
    <location>
        <begin position="346"/>
        <end position="355"/>
    </location>
</feature>
<feature type="turn" evidence="13">
    <location>
        <begin position="356"/>
        <end position="358"/>
    </location>
</feature>
<feature type="turn" evidence="13">
    <location>
        <begin position="367"/>
        <end position="369"/>
    </location>
</feature>
<feature type="helix" evidence="13">
    <location>
        <begin position="370"/>
        <end position="383"/>
    </location>
</feature>
<sequence>MATAKGIAIGIDLGTTYSCVGVFQHGKVEIIANDQGNRTTPSYVAFTDTERLIGDAAKNQVAMNPQNTVFDAKRLIGRKFNDPVVQADMKLWPFQVINEGGKPKVLVSYKGENKAFYPEEISSMVLTKLKETAEAFLGHPVTNAVITVPAYFNDSQRQATKDAGVIAGLNVLRIINEPTAAAIAYGLDKGGQGERHVLIFDLGGGTFDVSILTIDDGIFEVKATAGDTHLGGEDFDNRLVSHFVEEFKRKHKKDISQNKRAVRRLRTACERAKRTLSSSTQANLEIDSLYEGIDFYTSITRARFEELCADLFRGTLEPVEKALRDAKMDKAKIHDIVLVGGSTRIPKVQRLLQDYFNGRDLNKSINPDEAVAYGAAVQAAILMGDKSEKVQDLLLLDVAPLSLGLETAGGVMTALIKRNSTIPTKQTQIFTTYSDNQPGVLIQVYEGERAMTKDNNLLGRFDLTGIPPAPRGVPQIEVTFDIDANGILNVTATDKSTGKVNKITITNDKGRLSKEEIERMVLDAEKYKAEDEVQREKIAAKNALESYAFNMKSVVSDEGLKGKISESDKNKILDKCNELLSWLEVNQLAEKDEFDHKRKELEQMCNPIITKLYQGGCTGPACGTGYVPGRPATGPTIEEVD</sequence>
<name>HS71L_HUMAN</name>
<accession>P34931</accession>
<accession>A6NNB0</accession>
<accession>B0UXW8</accession>
<accession>O75634</accession>
<accession>Q2HXR3</accession>
<accession>Q8NE72</accession>
<accession>Q96QC9</accession>
<accession>Q9UQM1</accession>
<dbReference type="EMBL" id="M59829">
    <property type="protein sequence ID" value="AAA63228.1"/>
    <property type="molecule type" value="Genomic_DNA"/>
</dbReference>
<dbReference type="EMBL" id="D85730">
    <property type="protein sequence ID" value="BAA32521.1"/>
    <property type="molecule type" value="mRNA"/>
</dbReference>
<dbReference type="EMBL" id="AF134726">
    <property type="protein sequence ID" value="AAD21817.1"/>
    <property type="molecule type" value="Genomic_DNA"/>
</dbReference>
<dbReference type="EMBL" id="BA000025">
    <property type="protein sequence ID" value="BAB63301.1"/>
    <property type="molecule type" value="Genomic_DNA"/>
</dbReference>
<dbReference type="EMBL" id="DQ383515">
    <property type="protein sequence ID" value="ABC88476.1"/>
    <property type="molecule type" value="Genomic_DNA"/>
</dbReference>
<dbReference type="EMBL" id="AL662834">
    <property type="status" value="NOT_ANNOTATED_CDS"/>
    <property type="molecule type" value="Genomic_DNA"/>
</dbReference>
<dbReference type="EMBL" id="AL671762">
    <property type="status" value="NOT_ANNOTATED_CDS"/>
    <property type="molecule type" value="Genomic_DNA"/>
</dbReference>
<dbReference type="EMBL" id="AL929592">
    <property type="status" value="NOT_ANNOTATED_CDS"/>
    <property type="molecule type" value="Genomic_DNA"/>
</dbReference>
<dbReference type="EMBL" id="CR388202">
    <property type="status" value="NOT_ANNOTATED_CDS"/>
    <property type="molecule type" value="Genomic_DNA"/>
</dbReference>
<dbReference type="EMBL" id="BC034483">
    <property type="protein sequence ID" value="AAH34483.1"/>
    <property type="molecule type" value="mRNA"/>
</dbReference>
<dbReference type="CCDS" id="CCDS34413.1"/>
<dbReference type="PIR" id="B45871">
    <property type="entry name" value="B45871"/>
</dbReference>
<dbReference type="RefSeq" id="NP_005518.3">
    <property type="nucleotide sequence ID" value="NM_005527.3"/>
</dbReference>
<dbReference type="PDB" id="3GDQ">
    <property type="method" value="X-ray"/>
    <property type="resolution" value="1.80 A"/>
    <property type="chains" value="A=1-386"/>
</dbReference>
<dbReference type="PDBsum" id="3GDQ"/>
<dbReference type="SMR" id="P34931"/>
<dbReference type="BioGRID" id="109537">
    <property type="interactions" value="309"/>
</dbReference>
<dbReference type="CORUM" id="P34931"/>
<dbReference type="ELM" id="P34931"/>
<dbReference type="FunCoup" id="P34931">
    <property type="interactions" value="1531"/>
</dbReference>
<dbReference type="IntAct" id="P34931">
    <property type="interactions" value="115"/>
</dbReference>
<dbReference type="MINT" id="P34931"/>
<dbReference type="STRING" id="9606.ENSP00000364805"/>
<dbReference type="BindingDB" id="P34931"/>
<dbReference type="ChEMBL" id="CHEMBL5465288"/>
<dbReference type="GlyConnect" id="1297">
    <property type="glycosylation" value="2 N-Linked glycans (2 sites)"/>
</dbReference>
<dbReference type="GlyCosmos" id="P34931">
    <property type="glycosylation" value="2 sites, 2 glycans"/>
</dbReference>
<dbReference type="GlyGen" id="P34931">
    <property type="glycosylation" value="2 sites, 1 N-linked glycan (1 site), 1 O-linked glycan (1 site)"/>
</dbReference>
<dbReference type="iPTMnet" id="P34931"/>
<dbReference type="PhosphoSitePlus" id="P34931"/>
<dbReference type="SwissPalm" id="P34931"/>
<dbReference type="BioMuta" id="HSPA1L"/>
<dbReference type="DMDM" id="23831140"/>
<dbReference type="jPOST" id="P34931"/>
<dbReference type="MassIVE" id="P34931"/>
<dbReference type="PaxDb" id="9606-ENSP00000364805"/>
<dbReference type="PeptideAtlas" id="P34931"/>
<dbReference type="PRIDE" id="P34931"/>
<dbReference type="ProteomicsDB" id="54956"/>
<dbReference type="Pumba" id="P34931"/>
<dbReference type="TopDownProteomics" id="P34931"/>
<dbReference type="Antibodypedia" id="13096">
    <property type="antibodies" value="404 antibodies from 35 providers"/>
</dbReference>
<dbReference type="DNASU" id="3305"/>
<dbReference type="Ensembl" id="ENST00000375654.5">
    <property type="protein sequence ID" value="ENSP00000364805.4"/>
    <property type="gene ID" value="ENSG00000204390.10"/>
</dbReference>
<dbReference type="Ensembl" id="ENST00000383390.4">
    <property type="protein sequence ID" value="ENSP00000372881.4"/>
    <property type="gene ID" value="ENSG00000206383.8"/>
</dbReference>
<dbReference type="Ensembl" id="ENST00000417601.2">
    <property type="protein sequence ID" value="ENSP00000396486.2"/>
    <property type="gene ID" value="ENSG00000234258.6"/>
</dbReference>
<dbReference type="Ensembl" id="ENST00000456772.2">
    <property type="protein sequence ID" value="ENSP00000408347.2"/>
    <property type="gene ID" value="ENSG00000236251.6"/>
</dbReference>
<dbReference type="GeneID" id="3305"/>
<dbReference type="KEGG" id="hsa:3305"/>
<dbReference type="MANE-Select" id="ENST00000375654.5">
    <property type="protein sequence ID" value="ENSP00000364805.4"/>
    <property type="RefSeq nucleotide sequence ID" value="NM_005527.4"/>
    <property type="RefSeq protein sequence ID" value="NP_005518.3"/>
</dbReference>
<dbReference type="UCSC" id="uc003nxh.4">
    <property type="organism name" value="human"/>
</dbReference>
<dbReference type="AGR" id="HGNC:5234"/>
<dbReference type="CTD" id="3305"/>
<dbReference type="DisGeNET" id="3305"/>
<dbReference type="GeneCards" id="HSPA1L"/>
<dbReference type="HGNC" id="HGNC:5234">
    <property type="gene designation" value="HSPA1L"/>
</dbReference>
<dbReference type="HPA" id="ENSG00000204390">
    <property type="expression patterns" value="Tissue enriched (testis)"/>
</dbReference>
<dbReference type="MIM" id="140559">
    <property type="type" value="gene"/>
</dbReference>
<dbReference type="neXtProt" id="NX_P34931"/>
<dbReference type="OpenTargets" id="ENSG00000204390"/>
<dbReference type="PharmGKB" id="PA29500"/>
<dbReference type="VEuPathDB" id="HostDB:ENSG00000204390"/>
<dbReference type="eggNOG" id="KOG0101">
    <property type="taxonomic scope" value="Eukaryota"/>
</dbReference>
<dbReference type="GeneTree" id="ENSGT00940000162096"/>
<dbReference type="HOGENOM" id="CLU_005965_2_1_1"/>
<dbReference type="InParanoid" id="P34931"/>
<dbReference type="OMA" id="VCKPIVT"/>
<dbReference type="OrthoDB" id="2401965at2759"/>
<dbReference type="PAN-GO" id="P34931">
    <property type="GO annotations" value="15 GO annotations based on evolutionary models"/>
</dbReference>
<dbReference type="PhylomeDB" id="P34931"/>
<dbReference type="TreeFam" id="TF105042"/>
<dbReference type="PathwayCommons" id="P34931"/>
<dbReference type="Reactome" id="R-HSA-3371453">
    <property type="pathway name" value="Regulation of HSF1-mediated heat shock response"/>
</dbReference>
<dbReference type="Reactome" id="R-HSA-3371497">
    <property type="pathway name" value="HSP90 chaperone cycle for steroid hormone receptors (SHR) in the presence of ligand"/>
</dbReference>
<dbReference type="Reactome" id="R-HSA-3371568">
    <property type="pathway name" value="Attenuation phase"/>
</dbReference>
<dbReference type="Reactome" id="R-HSA-3371571">
    <property type="pathway name" value="HSF1-dependent transactivation"/>
</dbReference>
<dbReference type="Reactome" id="R-HSA-9833482">
    <property type="pathway name" value="PKR-mediated signaling"/>
</dbReference>
<dbReference type="SignaLink" id="P34931"/>
<dbReference type="SIGNOR" id="P34931"/>
<dbReference type="BioGRID-ORCS" id="3305">
    <property type="hits" value="12 hits in 1156 CRISPR screens"/>
</dbReference>
<dbReference type="CD-CODE" id="91857CE7">
    <property type="entry name" value="Nucleolus"/>
</dbReference>
<dbReference type="CD-CODE" id="BEB5E62D">
    <property type="entry name" value="Anisosome"/>
</dbReference>
<dbReference type="CD-CODE" id="FB4E32DD">
    <property type="entry name" value="Presynaptic clusters and postsynaptic densities"/>
</dbReference>
<dbReference type="EvolutionaryTrace" id="P34931"/>
<dbReference type="GeneWiki" id="HSPA1L"/>
<dbReference type="GenomeRNAi" id="3305"/>
<dbReference type="Pharos" id="P34931">
    <property type="development level" value="Tbio"/>
</dbReference>
<dbReference type="PRO" id="PR:P34931"/>
<dbReference type="Proteomes" id="UP000005640">
    <property type="component" value="Chromosome 6"/>
</dbReference>
<dbReference type="RNAct" id="P34931">
    <property type="molecule type" value="protein"/>
</dbReference>
<dbReference type="Bgee" id="ENSG00000204390">
    <property type="expression patterns" value="Expressed in left testis and 102 other cell types or tissues"/>
</dbReference>
<dbReference type="ExpressionAtlas" id="P34931">
    <property type="expression patterns" value="baseline and differential"/>
</dbReference>
<dbReference type="GO" id="GO:0072562">
    <property type="term" value="C:blood microparticle"/>
    <property type="evidence" value="ECO:0007005"/>
    <property type="project" value="UniProtKB"/>
</dbReference>
<dbReference type="GO" id="GO:0044297">
    <property type="term" value="C:cell body"/>
    <property type="evidence" value="ECO:0007669"/>
    <property type="project" value="Ensembl"/>
</dbReference>
<dbReference type="GO" id="GO:0005737">
    <property type="term" value="C:cytoplasm"/>
    <property type="evidence" value="ECO:0000318"/>
    <property type="project" value="GO_Central"/>
</dbReference>
<dbReference type="GO" id="GO:0005829">
    <property type="term" value="C:cytosol"/>
    <property type="evidence" value="ECO:0000314"/>
    <property type="project" value="UniProtKB"/>
</dbReference>
<dbReference type="GO" id="GO:0005654">
    <property type="term" value="C:nucleoplasm"/>
    <property type="evidence" value="ECO:0000304"/>
    <property type="project" value="Reactome"/>
</dbReference>
<dbReference type="GO" id="GO:0005634">
    <property type="term" value="C:nucleus"/>
    <property type="evidence" value="ECO:0000318"/>
    <property type="project" value="GO_Central"/>
</dbReference>
<dbReference type="GO" id="GO:0005886">
    <property type="term" value="C:plasma membrane"/>
    <property type="evidence" value="ECO:0000318"/>
    <property type="project" value="GO_Central"/>
</dbReference>
<dbReference type="GO" id="GO:0002199">
    <property type="term" value="C:zona pellucida receptor complex"/>
    <property type="evidence" value="ECO:0007669"/>
    <property type="project" value="Ensembl"/>
</dbReference>
<dbReference type="GO" id="GO:0005524">
    <property type="term" value="F:ATP binding"/>
    <property type="evidence" value="ECO:0007669"/>
    <property type="project" value="UniProtKB-KW"/>
</dbReference>
<dbReference type="GO" id="GO:0016887">
    <property type="term" value="F:ATP hydrolysis activity"/>
    <property type="evidence" value="ECO:0000318"/>
    <property type="project" value="GO_Central"/>
</dbReference>
<dbReference type="GO" id="GO:0140662">
    <property type="term" value="F:ATP-dependent protein folding chaperone"/>
    <property type="evidence" value="ECO:0007669"/>
    <property type="project" value="InterPro"/>
</dbReference>
<dbReference type="GO" id="GO:0031072">
    <property type="term" value="F:heat shock protein binding"/>
    <property type="evidence" value="ECO:0000353"/>
    <property type="project" value="UniProtKB"/>
</dbReference>
<dbReference type="GO" id="GO:0044183">
    <property type="term" value="F:protein folding chaperone"/>
    <property type="evidence" value="ECO:0000318"/>
    <property type="project" value="GO_Central"/>
</dbReference>
<dbReference type="GO" id="GO:0031625">
    <property type="term" value="F:ubiquitin protein ligase binding"/>
    <property type="evidence" value="ECO:0000353"/>
    <property type="project" value="ParkinsonsUK-UCL"/>
</dbReference>
<dbReference type="GO" id="GO:0051082">
    <property type="term" value="F:unfolded protein binding"/>
    <property type="evidence" value="ECO:0000314"/>
    <property type="project" value="UniProtKB"/>
</dbReference>
<dbReference type="GO" id="GO:0007339">
    <property type="term" value="P:binding of sperm to zona pellucida"/>
    <property type="evidence" value="ECO:0007669"/>
    <property type="project" value="Ensembl"/>
</dbReference>
<dbReference type="GO" id="GO:0051085">
    <property type="term" value="P:chaperone cofactor-dependent protein refolding"/>
    <property type="evidence" value="ECO:0000318"/>
    <property type="project" value="GO_Central"/>
</dbReference>
<dbReference type="GO" id="GO:1903955">
    <property type="term" value="P:positive regulation of protein targeting to mitochondrion"/>
    <property type="evidence" value="ECO:0000315"/>
    <property type="project" value="ParkinsonsUK-UCL"/>
</dbReference>
<dbReference type="GO" id="GO:0042026">
    <property type="term" value="P:protein refolding"/>
    <property type="evidence" value="ECO:0000314"/>
    <property type="project" value="UniProtKB"/>
</dbReference>
<dbReference type="GO" id="GO:0006986">
    <property type="term" value="P:response to unfolded protein"/>
    <property type="evidence" value="ECO:0000304"/>
    <property type="project" value="ProtInc"/>
</dbReference>
<dbReference type="CDD" id="cd10233">
    <property type="entry name" value="ASKHA_NBD_HSP70_HSPA1"/>
    <property type="match status" value="1"/>
</dbReference>
<dbReference type="FunFam" id="2.60.34.10:FF:000002">
    <property type="entry name" value="Heat shock 70 kDa"/>
    <property type="match status" value="1"/>
</dbReference>
<dbReference type="FunFam" id="3.30.420.40:FF:000172">
    <property type="entry name" value="Heat shock 70 kDa protein"/>
    <property type="match status" value="1"/>
</dbReference>
<dbReference type="FunFam" id="1.20.1270.10:FF:000019">
    <property type="entry name" value="Heat shock 70 kDa protein 1-like"/>
    <property type="match status" value="1"/>
</dbReference>
<dbReference type="FunFam" id="3.30.30.30:FF:000001">
    <property type="entry name" value="heat shock 70 kDa protein-like"/>
    <property type="match status" value="1"/>
</dbReference>
<dbReference type="FunFam" id="3.30.420.40:FF:000028">
    <property type="entry name" value="heat shock 70 kDa protein-like"/>
    <property type="match status" value="1"/>
</dbReference>
<dbReference type="FunFam" id="3.30.420.40:FF:000135">
    <property type="entry name" value="Heat shock cognate 71 kDa protein"/>
    <property type="match status" value="1"/>
</dbReference>
<dbReference type="FunFam" id="3.90.640.10:FF:000134">
    <property type="entry name" value="Heat shock cognate 71 kDa protein"/>
    <property type="match status" value="1"/>
</dbReference>
<dbReference type="FunFam" id="3.30.420.40:FF:000026">
    <property type="entry name" value="Heat shock protein 70"/>
    <property type="match status" value="1"/>
</dbReference>
<dbReference type="Gene3D" id="1.20.1270.10">
    <property type="match status" value="1"/>
</dbReference>
<dbReference type="Gene3D" id="3.30.30.30">
    <property type="match status" value="1"/>
</dbReference>
<dbReference type="Gene3D" id="3.30.420.40">
    <property type="match status" value="2"/>
</dbReference>
<dbReference type="Gene3D" id="3.90.640.10">
    <property type="entry name" value="Actin, Chain A, domain 4"/>
    <property type="match status" value="1"/>
</dbReference>
<dbReference type="Gene3D" id="2.60.34.10">
    <property type="entry name" value="Substrate Binding Domain Of DNAk, Chain A, domain 1"/>
    <property type="match status" value="1"/>
</dbReference>
<dbReference type="InterPro" id="IPR043129">
    <property type="entry name" value="ATPase_NBD"/>
</dbReference>
<dbReference type="InterPro" id="IPR018181">
    <property type="entry name" value="Heat_shock_70_CS"/>
</dbReference>
<dbReference type="InterPro" id="IPR029048">
    <property type="entry name" value="HSP70_C_sf"/>
</dbReference>
<dbReference type="InterPro" id="IPR029047">
    <property type="entry name" value="HSP70_peptide-bd_sf"/>
</dbReference>
<dbReference type="InterPro" id="IPR013126">
    <property type="entry name" value="Hsp_70_fam"/>
</dbReference>
<dbReference type="NCBIfam" id="NF001413">
    <property type="entry name" value="PRK00290.1"/>
    <property type="match status" value="1"/>
</dbReference>
<dbReference type="PANTHER" id="PTHR19375">
    <property type="entry name" value="HEAT SHOCK PROTEIN 70KDA"/>
    <property type="match status" value="1"/>
</dbReference>
<dbReference type="Pfam" id="PF00012">
    <property type="entry name" value="HSP70"/>
    <property type="match status" value="1"/>
</dbReference>
<dbReference type="PRINTS" id="PR00301">
    <property type="entry name" value="HEATSHOCK70"/>
</dbReference>
<dbReference type="SUPFAM" id="SSF53067">
    <property type="entry name" value="Actin-like ATPase domain"/>
    <property type="match status" value="2"/>
</dbReference>
<dbReference type="SUPFAM" id="SSF100934">
    <property type="entry name" value="Heat shock protein 70kD (HSP70), C-terminal subdomain"/>
    <property type="match status" value="1"/>
</dbReference>
<dbReference type="SUPFAM" id="SSF100920">
    <property type="entry name" value="Heat shock protein 70kD (HSP70), peptide-binding domain"/>
    <property type="match status" value="1"/>
</dbReference>
<dbReference type="PROSITE" id="PS00297">
    <property type="entry name" value="HSP70_1"/>
    <property type="match status" value="1"/>
</dbReference>
<dbReference type="PROSITE" id="PS00329">
    <property type="entry name" value="HSP70_2"/>
    <property type="match status" value="1"/>
</dbReference>
<dbReference type="PROSITE" id="PS01036">
    <property type="entry name" value="HSP70_3"/>
    <property type="match status" value="1"/>
</dbReference>
<comment type="function">
    <text evidence="7 10">Molecular chaperone implicated in a wide variety of cellular processes, including protection of the proteome from stress, folding and transport of newly synthesized polypeptides, activation of proteolysis of misfolded proteins and the formation and dissociation of protein complexes. Plays a pivotal role in the protein quality control system, ensuring the correct folding of proteins, the re-folding of misfolded proteins and controlling the targeting of proteins for subsequent degradation. This is achieved through cycles of ATP binding, ATP hydrolysis and ADP release, mediated by co-chaperones. The affinity for polypeptides is regulated by its nucleotide bound state. In the ATP-bound form, it has a low affinity for substrate proteins. However, upon hydrolysis of the ATP to ADP, it undergoes a conformational change that increases its affinity for substrate proteins. It goes through repeated cycles of ATP hydrolysis and nucleotide exchange, which permits cycles of substrate binding and release (PubMed:26865365). Positive regulator of PRKN translocation to damaged mitochondria (PubMed:24270810).</text>
</comment>
<comment type="subunit">
    <text evidence="6 7">Interacts with PRKN.</text>
</comment>
<comment type="interaction">
    <interactant intactId="EBI-354912">
        <id>P34931</id>
    </interactant>
    <interactant intactId="EBI-2949658">
        <id>O95429</id>
        <label>BAG4</label>
    </interactant>
    <organismsDiffer>false</organismsDiffer>
    <experiments>4</experiments>
</comment>
<comment type="interaction">
    <interactant intactId="EBI-354912">
        <id>P34931</id>
    </interactant>
    <interactant intactId="EBI-2130415">
        <id>O00635</id>
        <label>TRIM38</label>
    </interactant>
    <organismsDiffer>false</organismsDiffer>
    <experiments>3</experiments>
</comment>
<comment type="tissue specificity">
    <text evidence="8">Expressed in spermatids.</text>
</comment>
<comment type="induction">
    <text evidence="5">Not induced by heat shock.</text>
</comment>
<comment type="domain">
    <text evidence="12">The N-terminal nucleotide binding domain (NBD) (also known as the ATPase domain) is responsible for binding and hydrolyzing ATP. The C-terminal substrate-binding domain (SBD) (also known as peptide-binding domain) binds to the client/substrate proteins. The two domains are allosterically coupled so that, when ATP is bound to the NBD, the SBD binds relatively weakly to clients. When ADP is bound in the NBD, a conformational change enhances the affinity of the SBD for client proteins.</text>
</comment>
<comment type="similarity">
    <text evidence="11">Belongs to the heat shock protein 70 family.</text>
</comment>
<organism>
    <name type="scientific">Homo sapiens</name>
    <name type="common">Human</name>
    <dbReference type="NCBI Taxonomy" id="9606"/>
    <lineage>
        <taxon>Eukaryota</taxon>
        <taxon>Metazoa</taxon>
        <taxon>Chordata</taxon>
        <taxon>Craniata</taxon>
        <taxon>Vertebrata</taxon>
        <taxon>Euteleostomi</taxon>
        <taxon>Mammalia</taxon>
        <taxon>Eutheria</taxon>
        <taxon>Euarchontoglires</taxon>
        <taxon>Primates</taxon>
        <taxon>Haplorrhini</taxon>
        <taxon>Catarrhini</taxon>
        <taxon>Hominidae</taxon>
        <taxon>Homo</taxon>
    </lineage>
</organism>
<reference key="1">
    <citation type="journal article" date="1990" name="Immunogenetics">
        <title>Structure and expression of the three MHC-linked HSP70 genes.</title>
        <authorList>
            <person name="Milner C.M."/>
            <person name="Campbell R.D."/>
        </authorList>
    </citation>
    <scope>NUCLEOTIDE SEQUENCE [GENOMIC DNA]</scope>
    <scope>INDUCTION</scope>
</reference>
<reference key="2">
    <citation type="journal article" date="1998" name="J. Biochem.">
        <title>Genomic structure of the spermatid-specific HSP70 homolog gene located in the class III region of the major histocompatibility complex of mouse and man.</title>
        <authorList>
            <person name="Ito Y."/>
            <person name="Ando A."/>
            <person name="Ando H."/>
            <person name="Ando J."/>
            <person name="Saijoh Y."/>
            <person name="Inoko H."/>
            <person name="Fujimoto H."/>
        </authorList>
    </citation>
    <scope>NUCLEOTIDE SEQUENCE [GENOMIC DNA / MRNA]</scope>
    <scope>TISSUE SPECIFICITY</scope>
    <source>
        <tissue>Testis</tissue>
    </source>
</reference>
<reference key="3">
    <citation type="journal article" date="2003" name="Genome Res.">
        <title>Analysis of the gene-dense major histocompatibility complex class III region and its comparison to mouse.</title>
        <authorList>
            <person name="Xie T."/>
            <person name="Rowen L."/>
            <person name="Aguado B."/>
            <person name="Ahearn M.E."/>
            <person name="Madan A."/>
            <person name="Qin S."/>
            <person name="Campbell R.D."/>
            <person name="Hood L."/>
        </authorList>
    </citation>
    <scope>NUCLEOTIDE SEQUENCE [LARGE SCALE GENOMIC DNA]</scope>
</reference>
<reference key="4">
    <citation type="submission" date="1999-09" db="EMBL/GenBank/DDBJ databases">
        <title>Homo sapiens 2,229,817bp genomic DNA of 6p21.3 HLA class I region.</title>
        <authorList>
            <person name="Shiina S."/>
            <person name="Tamiya G."/>
            <person name="Oka A."/>
            <person name="Inoko H."/>
        </authorList>
    </citation>
    <scope>NUCLEOTIDE SEQUENCE [LARGE SCALE GENOMIC DNA]</scope>
</reference>
<reference key="5">
    <citation type="submission" date="2006-01" db="EMBL/GenBank/DDBJ databases">
        <authorList>
            <consortium name="NIEHS SNPs program"/>
        </authorList>
    </citation>
    <scope>NUCLEOTIDE SEQUENCE [GENOMIC DNA]</scope>
    <scope>VARIANTS PRO-8; THR-268; GLY-294; MET-479; MET-493; ALA-558 AND LYS-602</scope>
</reference>
<reference key="6">
    <citation type="journal article" date="2003" name="Nature">
        <title>The DNA sequence and analysis of human chromosome 6.</title>
        <authorList>
            <person name="Mungall A.J."/>
            <person name="Palmer S.A."/>
            <person name="Sims S.K."/>
            <person name="Edwards C.A."/>
            <person name="Ashurst J.L."/>
            <person name="Wilming L."/>
            <person name="Jones M.C."/>
            <person name="Horton R."/>
            <person name="Hunt S.E."/>
            <person name="Scott C.E."/>
            <person name="Gilbert J.G.R."/>
            <person name="Clamp M.E."/>
            <person name="Bethel G."/>
            <person name="Milne S."/>
            <person name="Ainscough R."/>
            <person name="Almeida J.P."/>
            <person name="Ambrose K.D."/>
            <person name="Andrews T.D."/>
            <person name="Ashwell R.I.S."/>
            <person name="Babbage A.K."/>
            <person name="Bagguley C.L."/>
            <person name="Bailey J."/>
            <person name="Banerjee R."/>
            <person name="Barker D.J."/>
            <person name="Barlow K.F."/>
            <person name="Bates K."/>
            <person name="Beare D.M."/>
            <person name="Beasley H."/>
            <person name="Beasley O."/>
            <person name="Bird C.P."/>
            <person name="Blakey S.E."/>
            <person name="Bray-Allen S."/>
            <person name="Brook J."/>
            <person name="Brown A.J."/>
            <person name="Brown J.Y."/>
            <person name="Burford D.C."/>
            <person name="Burrill W."/>
            <person name="Burton J."/>
            <person name="Carder C."/>
            <person name="Carter N.P."/>
            <person name="Chapman J.C."/>
            <person name="Clark S.Y."/>
            <person name="Clark G."/>
            <person name="Clee C.M."/>
            <person name="Clegg S."/>
            <person name="Cobley V."/>
            <person name="Collier R.E."/>
            <person name="Collins J.E."/>
            <person name="Colman L.K."/>
            <person name="Corby N.R."/>
            <person name="Coville G.J."/>
            <person name="Culley K.M."/>
            <person name="Dhami P."/>
            <person name="Davies J."/>
            <person name="Dunn M."/>
            <person name="Earthrowl M.E."/>
            <person name="Ellington A.E."/>
            <person name="Evans K.A."/>
            <person name="Faulkner L."/>
            <person name="Francis M.D."/>
            <person name="Frankish A."/>
            <person name="Frankland J."/>
            <person name="French L."/>
            <person name="Garner P."/>
            <person name="Garnett J."/>
            <person name="Ghori M.J."/>
            <person name="Gilby L.M."/>
            <person name="Gillson C.J."/>
            <person name="Glithero R.J."/>
            <person name="Grafham D.V."/>
            <person name="Grant M."/>
            <person name="Gribble S."/>
            <person name="Griffiths C."/>
            <person name="Griffiths M.N.D."/>
            <person name="Hall R."/>
            <person name="Halls K.S."/>
            <person name="Hammond S."/>
            <person name="Harley J.L."/>
            <person name="Hart E.A."/>
            <person name="Heath P.D."/>
            <person name="Heathcott R."/>
            <person name="Holmes S.J."/>
            <person name="Howden P.J."/>
            <person name="Howe K.L."/>
            <person name="Howell G.R."/>
            <person name="Huckle E."/>
            <person name="Humphray S.J."/>
            <person name="Humphries M.D."/>
            <person name="Hunt A.R."/>
            <person name="Johnson C.M."/>
            <person name="Joy A.A."/>
            <person name="Kay M."/>
            <person name="Keenan S.J."/>
            <person name="Kimberley A.M."/>
            <person name="King A."/>
            <person name="Laird G.K."/>
            <person name="Langford C."/>
            <person name="Lawlor S."/>
            <person name="Leongamornlert D.A."/>
            <person name="Leversha M."/>
            <person name="Lloyd C.R."/>
            <person name="Lloyd D.M."/>
            <person name="Loveland J.E."/>
            <person name="Lovell J."/>
            <person name="Martin S."/>
            <person name="Mashreghi-Mohammadi M."/>
            <person name="Maslen G.L."/>
            <person name="Matthews L."/>
            <person name="McCann O.T."/>
            <person name="McLaren S.J."/>
            <person name="McLay K."/>
            <person name="McMurray A."/>
            <person name="Moore M.J.F."/>
            <person name="Mullikin J.C."/>
            <person name="Niblett D."/>
            <person name="Nickerson T."/>
            <person name="Novik K.L."/>
            <person name="Oliver K."/>
            <person name="Overton-Larty E.K."/>
            <person name="Parker A."/>
            <person name="Patel R."/>
            <person name="Pearce A.V."/>
            <person name="Peck A.I."/>
            <person name="Phillimore B.J.C.T."/>
            <person name="Phillips S."/>
            <person name="Plumb R.W."/>
            <person name="Porter K.M."/>
            <person name="Ramsey Y."/>
            <person name="Ranby S.A."/>
            <person name="Rice C.M."/>
            <person name="Ross M.T."/>
            <person name="Searle S.M."/>
            <person name="Sehra H.K."/>
            <person name="Sheridan E."/>
            <person name="Skuce C.D."/>
            <person name="Smith S."/>
            <person name="Smith M."/>
            <person name="Spraggon L."/>
            <person name="Squares S.L."/>
            <person name="Steward C.A."/>
            <person name="Sycamore N."/>
            <person name="Tamlyn-Hall G."/>
            <person name="Tester J."/>
            <person name="Theaker A.J."/>
            <person name="Thomas D.W."/>
            <person name="Thorpe A."/>
            <person name="Tracey A."/>
            <person name="Tromans A."/>
            <person name="Tubby B."/>
            <person name="Wall M."/>
            <person name="Wallis J.M."/>
            <person name="West A.P."/>
            <person name="White S.S."/>
            <person name="Whitehead S.L."/>
            <person name="Whittaker H."/>
            <person name="Wild A."/>
            <person name="Willey D.J."/>
            <person name="Wilmer T.E."/>
            <person name="Wood J.M."/>
            <person name="Wray P.W."/>
            <person name="Wyatt J.C."/>
            <person name="Young L."/>
            <person name="Younger R.M."/>
            <person name="Bentley D.R."/>
            <person name="Coulson A."/>
            <person name="Durbin R.M."/>
            <person name="Hubbard T."/>
            <person name="Sulston J.E."/>
            <person name="Dunham I."/>
            <person name="Rogers J."/>
            <person name="Beck S."/>
        </authorList>
    </citation>
    <scope>NUCLEOTIDE SEQUENCE [LARGE SCALE GENOMIC DNA]</scope>
    <scope>VARIANT MET-493</scope>
</reference>
<reference key="7">
    <citation type="journal article" date="2004" name="Genome Res.">
        <title>The status, quality, and expansion of the NIH full-length cDNA project: the Mammalian Gene Collection (MGC).</title>
        <authorList>
            <consortium name="The MGC Project Team"/>
        </authorList>
    </citation>
    <scope>NUCLEOTIDE SEQUENCE [LARGE SCALE MRNA]</scope>
    <scope>VARIANT MET-493</scope>
    <source>
        <tissue>Testis</tissue>
    </source>
</reference>
<reference key="8">
    <citation type="journal article" date="2011" name="BMC Syst. Biol.">
        <title>Initial characterization of the human central proteome.</title>
        <authorList>
            <person name="Burkard T.R."/>
            <person name="Planyavsky M."/>
            <person name="Kaupe I."/>
            <person name="Breitwieser F.P."/>
            <person name="Buerckstuemmer T."/>
            <person name="Bennett K.L."/>
            <person name="Superti-Furga G."/>
            <person name="Colinge J."/>
        </authorList>
    </citation>
    <scope>IDENTIFICATION BY MASS SPECTROMETRY [LARGE SCALE ANALYSIS]</scope>
</reference>
<reference key="9">
    <citation type="journal article" date="2013" name="Nature">
        <title>High-content genome-wide RNAi screens identify regulators of parkin upstream of mitophagy.</title>
        <authorList>
            <person name="Hasson S.A."/>
            <person name="Kane L.A."/>
            <person name="Yamano K."/>
            <person name="Huang C.H."/>
            <person name="Sliter D.A."/>
            <person name="Buehler E."/>
            <person name="Wang C."/>
            <person name="Heman-Ackah S.M."/>
            <person name="Hessa T."/>
            <person name="Guha R."/>
            <person name="Martin S.E."/>
            <person name="Youle R.J."/>
        </authorList>
    </citation>
    <scope>FUNCTION IN PRKN TRANSLOCATION</scope>
    <scope>INTERACTION WITH PRKN</scope>
    <scope>MUTAGENESIS OF LYS-73; LEU-396 AND 638-GLU--ASP-641</scope>
</reference>
<reference key="10">
    <citation type="journal article" date="2016" name="Cell Stress Chaperones">
        <title>The human HSP70 family of chaperones: where do we stand?</title>
        <authorList>
            <person name="Radons J."/>
        </authorList>
    </citation>
    <scope>REVIEW</scope>
</reference>
<reference key="11">
    <citation type="journal article" date="2010" name="PLoS ONE">
        <title>Crystal structures of the ATPase domains of four human Hsp70 isoforms: HSPA1L/Hsp70-hom, HSPA2/Hsp70-2, HSPA6/Hsp70B', and HSPA5/BiP/GRP78.</title>
        <authorList>
            <person name="Wisniewska M."/>
            <person name="Karlberg T."/>
            <person name="Lehtio L."/>
            <person name="Johansson I."/>
            <person name="Kotenyova T."/>
            <person name="Moche M."/>
            <person name="Schuler H."/>
        </authorList>
    </citation>
    <scope>X-RAY CRYSTALLOGRAPHY (1.80 ANGSTROMS) OF 2-386 IN COMPLEX WITH ADP AND PHOSPHATE</scope>
</reference>
<reference key="12">
    <citation type="journal article" date="1992" name="Immunogenetics">
        <title>Polymorphic analysis of the three MHC-linked HSP70 genes.</title>
        <authorList>
            <person name="Milner C.M."/>
            <person name="Campbell R.D."/>
        </authorList>
    </citation>
    <scope>VARIANT MET-493</scope>
</reference>
<proteinExistence type="evidence at protein level"/>
<protein>
    <recommendedName>
        <fullName>Heat shock 70 kDa protein 1-like</fullName>
        <shortName>Heat shock 70 kDa protein 1L</shortName>
    </recommendedName>
    <alternativeName>
        <fullName>Heat shock 70 kDa protein 1-Hom</fullName>
        <shortName>HSP70-Hom</shortName>
    </alternativeName>
    <alternativeName>
        <fullName>Heat shock protein family A member 1L</fullName>
    </alternativeName>
</protein>
<gene>
    <name type="primary">HSPA1L</name>
</gene>
<keyword id="KW-0002">3D-structure</keyword>
<keyword id="KW-0067">ATP-binding</keyword>
<keyword id="KW-0547">Nucleotide-binding</keyword>
<keyword id="KW-1267">Proteomics identification</keyword>
<keyword id="KW-1185">Reference proteome</keyword>
<evidence type="ECO:0000250" key="1">
    <source>
        <dbReference type="UniProtKB" id="P11142"/>
    </source>
</evidence>
<evidence type="ECO:0000269" key="2">
    <source>
    </source>
</evidence>
<evidence type="ECO:0000269" key="3">
    <source>
    </source>
</evidence>
<evidence type="ECO:0000269" key="4">
    <source>
    </source>
</evidence>
<evidence type="ECO:0000269" key="5">
    <source>
    </source>
</evidence>
<evidence type="ECO:0000269" key="6">
    <source>
    </source>
</evidence>
<evidence type="ECO:0000269" key="7">
    <source>
    </source>
</evidence>
<evidence type="ECO:0000269" key="8">
    <source>
    </source>
</evidence>
<evidence type="ECO:0000269" key="9">
    <source ref="5"/>
</evidence>
<evidence type="ECO:0000303" key="10">
    <source>
    </source>
</evidence>
<evidence type="ECO:0000305" key="11"/>
<evidence type="ECO:0000305" key="12">
    <source>
    </source>
</evidence>
<evidence type="ECO:0007829" key="13">
    <source>
        <dbReference type="PDB" id="3GDQ"/>
    </source>
</evidence>